<sequence length="336" mass="37749">MNREMLYLNRSDIEQAGGNHSQVYVDALTEALTAHAHNDFVQPLKPYLRQDPENGHIADRIIAMPSHIGGEHAISGIKWIGSKHDNPSKRNMERASGVIILNDPETNYPIAVMEASLISSMRTAAVSVIAAKHLAKKGFKDLTIIGCGLIGDKQLQSMLEQFDHIERVFVYDQFSEACARFVDRWQQQRPEINFIATENAKEAVSNGEVVITCTVTDQPYIEYDWLQKGAFISNISIMDVHKEVFIKADKVVVDDWSQCNREKKTINQLVLEGKFSKEALHAELGQLVTGDIPGREDDDEIILLNPMGMAIEDISSAYFIYQQAQQQNIGTTLNLY</sequence>
<dbReference type="EC" id="1.5.1.51" evidence="4"/>
<dbReference type="EMBL" id="AY251022">
    <property type="protein sequence ID" value="AAP82064.1"/>
    <property type="molecule type" value="Genomic_DNA"/>
</dbReference>
<dbReference type="EMBL" id="CP000253">
    <property type="protein sequence ID" value="ABD29259.1"/>
    <property type="molecule type" value="Genomic_DNA"/>
</dbReference>
<dbReference type="RefSeq" id="WP_001078456.1">
    <property type="nucleotide sequence ID" value="NZ_LS483365.1"/>
</dbReference>
<dbReference type="RefSeq" id="YP_498676.1">
    <property type="nucleotide sequence ID" value="NC_007795.1"/>
</dbReference>
<dbReference type="SMR" id="Q2G1N2"/>
<dbReference type="STRING" id="93061.SAOUHSC_00076"/>
<dbReference type="PaxDb" id="1280-SAXN108_0103"/>
<dbReference type="GeneID" id="3919454"/>
<dbReference type="KEGG" id="sao:SAOUHSC_00076"/>
<dbReference type="PATRIC" id="fig|1280.10758.peg.90"/>
<dbReference type="eggNOG" id="COG2423">
    <property type="taxonomic scope" value="Bacteria"/>
</dbReference>
<dbReference type="HOGENOM" id="CLU_042088_3_1_9"/>
<dbReference type="OrthoDB" id="9792005at2"/>
<dbReference type="BioCyc" id="MetaCyc:G1I0R-70-MONOMER"/>
<dbReference type="Proteomes" id="UP000008816">
    <property type="component" value="Chromosome"/>
</dbReference>
<dbReference type="GO" id="GO:0005737">
    <property type="term" value="C:cytoplasm"/>
    <property type="evidence" value="ECO:0000318"/>
    <property type="project" value="GO_Central"/>
</dbReference>
<dbReference type="GO" id="GO:0016639">
    <property type="term" value="F:oxidoreductase activity, acting on the CH-NH2 group of donors, NAD or NADP as acceptor"/>
    <property type="evidence" value="ECO:0000314"/>
    <property type="project" value="UniProtKB"/>
</dbReference>
<dbReference type="GO" id="GO:0019290">
    <property type="term" value="P:siderophore biosynthetic process"/>
    <property type="evidence" value="ECO:0000314"/>
    <property type="project" value="UniProtKB"/>
</dbReference>
<dbReference type="Gene3D" id="3.40.50.720">
    <property type="entry name" value="NAD(P)-binding Rossmann-like Domain"/>
    <property type="match status" value="1"/>
</dbReference>
<dbReference type="Gene3D" id="3.30.1780.10">
    <property type="entry name" value="ornithine cyclodeaminase, domain 1"/>
    <property type="match status" value="1"/>
</dbReference>
<dbReference type="InterPro" id="IPR007110">
    <property type="entry name" value="Ig-like_dom"/>
</dbReference>
<dbReference type="InterPro" id="IPR036291">
    <property type="entry name" value="NAD(P)-bd_dom_sf"/>
</dbReference>
<dbReference type="InterPro" id="IPR003462">
    <property type="entry name" value="ODC_Mu_crystall"/>
</dbReference>
<dbReference type="InterPro" id="IPR023401">
    <property type="entry name" value="ODC_N"/>
</dbReference>
<dbReference type="InterPro" id="IPR023866">
    <property type="entry name" value="SbnB"/>
</dbReference>
<dbReference type="NCBIfam" id="TIGR03944">
    <property type="entry name" value="dehyd_SbnB_fam"/>
    <property type="match status" value="1"/>
</dbReference>
<dbReference type="PANTHER" id="PTHR13812">
    <property type="entry name" value="KETIMINE REDUCTASE MU-CRYSTALLIN"/>
    <property type="match status" value="1"/>
</dbReference>
<dbReference type="PANTHER" id="PTHR13812:SF19">
    <property type="entry name" value="KETIMINE REDUCTASE MU-CRYSTALLIN"/>
    <property type="match status" value="1"/>
</dbReference>
<dbReference type="Pfam" id="PF02423">
    <property type="entry name" value="OCD_Mu_crystall"/>
    <property type="match status" value="1"/>
</dbReference>
<dbReference type="PIRSF" id="PIRSF001439">
    <property type="entry name" value="CryM"/>
    <property type="match status" value="1"/>
</dbReference>
<dbReference type="SUPFAM" id="SSF51735">
    <property type="entry name" value="NAD(P)-binding Rossmann-fold domains"/>
    <property type="match status" value="1"/>
</dbReference>
<name>SBNB_STAA8</name>
<keyword id="KW-0520">NAD</keyword>
<keyword id="KW-0560">Oxidoreductase</keyword>
<keyword id="KW-1185">Reference proteome</keyword>
<protein>
    <recommendedName>
        <fullName evidence="6">N-((2S)-2-amino-2-carboxyethyl)-L-glutamate dehydrogenase</fullName>
        <ecNumber evidence="4">1.5.1.51</ecNumber>
    </recommendedName>
    <alternativeName>
        <fullName evidence="6">Staphyloferrin B biosynthesis protein SbnB</fullName>
    </alternativeName>
</protein>
<gene>
    <name evidence="5" type="primary">sbnB</name>
    <name evidence="7" type="ordered locus">SAOUHSC_00076</name>
</gene>
<proteinExistence type="evidence at protein level"/>
<comment type="function">
    <text evidence="4">Catalyzes the hydrolysis of N-((2S)-2-amino-2-carboxyethyl)-L-glutamate (ACEGA) to form L-2,3-diaminopropionic acid and 2-oxoglutarate. Involved in the biosynthesis of L-2,3-diaminopropionic acid (L-Dap), a precursor of staphyloferrin B and antibiotics.</text>
</comment>
<comment type="catalytic activity">
    <reaction evidence="4">
        <text>N-[(2S)-2-amino-2-carboxyethyl]-L-glutamate + NAD(+) + H2O = (S)-2,3-diaminopropanoate + 2-oxoglutarate + NADH + H(+)</text>
        <dbReference type="Rhea" id="RHEA:51928"/>
        <dbReference type="ChEBI" id="CHEBI:15377"/>
        <dbReference type="ChEBI" id="CHEBI:15378"/>
        <dbReference type="ChEBI" id="CHEBI:16810"/>
        <dbReference type="ChEBI" id="CHEBI:57540"/>
        <dbReference type="ChEBI" id="CHEBI:57721"/>
        <dbReference type="ChEBI" id="CHEBI:57945"/>
        <dbReference type="ChEBI" id="CHEBI:134610"/>
        <dbReference type="EC" id="1.5.1.51"/>
    </reaction>
    <physiologicalReaction direction="left-to-right" evidence="4">
        <dbReference type="Rhea" id="RHEA:51929"/>
    </physiologicalReaction>
</comment>
<comment type="pathway">
    <text evidence="3">Siderophore biosynthesis.</text>
</comment>
<comment type="subunit">
    <text evidence="4">Homodimer.</text>
</comment>
<comment type="induction">
    <text evidence="2">Up-regulated under iron-deficient growth conditions. Repressed by Fur under iron-rich growth conditions.</text>
</comment>
<comment type="disruption phenotype">
    <text evidence="3">Mutation results in abrogation of synthesis of staphyloferrin B.</text>
</comment>
<comment type="similarity">
    <text evidence="6">Belongs to the ornithine cyclodeaminase/mu-crystallin family.</text>
</comment>
<accession>Q2G1N2</accession>
<accession>Q6X7U6</accession>
<evidence type="ECO:0000250" key="1">
    <source>
        <dbReference type="UniProtKB" id="O28608"/>
    </source>
</evidence>
<evidence type="ECO:0000269" key="2">
    <source>
    </source>
</evidence>
<evidence type="ECO:0000269" key="3">
    <source>
    </source>
</evidence>
<evidence type="ECO:0000269" key="4">
    <source>
    </source>
</evidence>
<evidence type="ECO:0000303" key="5">
    <source>
    </source>
</evidence>
<evidence type="ECO:0000305" key="6"/>
<evidence type="ECO:0000312" key="7">
    <source>
        <dbReference type="EMBL" id="ABD29259.1"/>
    </source>
</evidence>
<organism>
    <name type="scientific">Staphylococcus aureus (strain NCTC 8325 / PS 47)</name>
    <dbReference type="NCBI Taxonomy" id="93061"/>
    <lineage>
        <taxon>Bacteria</taxon>
        <taxon>Bacillati</taxon>
        <taxon>Bacillota</taxon>
        <taxon>Bacilli</taxon>
        <taxon>Bacillales</taxon>
        <taxon>Staphylococcaceae</taxon>
        <taxon>Staphylococcus</taxon>
    </lineage>
</organism>
<reference key="1">
    <citation type="journal article" date="2004" name="Infect. Immun.">
        <title>Role of siderophore biosynthesis in virulence of Staphylococcus aureus: identification and characterization of genes involved in production of a siderophore.</title>
        <authorList>
            <person name="Dale S.E."/>
            <person name="Doherty-Kirby A."/>
            <person name="Lajoie G."/>
            <person name="Heinrichs D.E."/>
        </authorList>
    </citation>
    <scope>NUCLEOTIDE SEQUENCE [GENOMIC DNA]</scope>
    <scope>INDUCTION</scope>
</reference>
<reference key="2">
    <citation type="book" date="2006" name="Gram positive pathogens, 2nd edition">
        <title>The Staphylococcus aureus NCTC 8325 genome.</title>
        <editorList>
            <person name="Fischetti V."/>
            <person name="Novick R."/>
            <person name="Ferretti J."/>
            <person name="Portnoy D."/>
            <person name="Rood J."/>
        </editorList>
        <authorList>
            <person name="Gillaspy A.F."/>
            <person name="Worrell V."/>
            <person name="Orvis J."/>
            <person name="Roe B.A."/>
            <person name="Dyer D.W."/>
            <person name="Iandolo J.J."/>
        </authorList>
    </citation>
    <scope>NUCLEOTIDE SEQUENCE [LARGE SCALE GENOMIC DNA]</scope>
    <source>
        <strain>NCTC 8325 / PS 47</strain>
    </source>
</reference>
<reference key="3">
    <citation type="journal article" date="2011" name="BMC Microbiol.">
        <title>Mutation of L-2,3-diaminopropionic acid synthase genes blocks staphyloferrin B synthesis in Staphylococcus aureus.</title>
        <authorList>
            <person name="Beasley F.C."/>
            <person name="Cheung J."/>
            <person name="Heinrichs D.E."/>
        </authorList>
    </citation>
    <scope>PATHWAY</scope>
    <scope>DISRUPTION PHENOTYPE</scope>
</reference>
<reference key="4">
    <citation type="journal article" date="2014" name="Chem. Biol.">
        <title>Synthesis of L-2,3-diaminopropionic acid, a siderophore and antibiotic precursor.</title>
        <authorList>
            <person name="Kobylarz M.J."/>
            <person name="Grigg J.C."/>
            <person name="Takayama S.J."/>
            <person name="Rai D.K."/>
            <person name="Heinrichs D.E."/>
            <person name="Murphy M.E."/>
        </authorList>
    </citation>
    <scope>FUNCTION</scope>
    <scope>CATALYTIC ACTIVITY</scope>
    <scope>SUBUNIT</scope>
</reference>
<feature type="chain" id="PRO_0000447129" description="N-((2S)-2-amino-2-carboxyethyl)-L-glutamate dehydrogenase">
    <location>
        <begin position="1"/>
        <end position="336"/>
    </location>
</feature>
<feature type="active site" description="Proton donor/acceptor" evidence="1">
    <location>
        <position position="78"/>
    </location>
</feature>
<feature type="binding site" evidence="1">
    <location>
        <position position="122"/>
    </location>
    <ligand>
        <name>NAD(+)</name>
        <dbReference type="ChEBI" id="CHEBI:57540"/>
    </ligand>
</feature>
<feature type="binding site" evidence="1">
    <location>
        <position position="242"/>
    </location>
    <ligand>
        <name>NAD(+)</name>
        <dbReference type="ChEBI" id="CHEBI:57540"/>
    </ligand>
</feature>